<name>Y1406_BRUAB</name>
<proteinExistence type="inferred from homology"/>
<dbReference type="EMBL" id="AE017223">
    <property type="protein sequence ID" value="AAX74736.1"/>
    <property type="molecule type" value="Genomic_DNA"/>
</dbReference>
<dbReference type="RefSeq" id="WP_002964519.1">
    <property type="nucleotide sequence ID" value="NC_006932.1"/>
</dbReference>
<dbReference type="SMR" id="Q57C98"/>
<dbReference type="EnsemblBacteria" id="AAX74736">
    <property type="protein sequence ID" value="AAX74736"/>
    <property type="gene ID" value="BruAb1_1406"/>
</dbReference>
<dbReference type="KEGG" id="bmb:BruAb1_1406"/>
<dbReference type="HOGENOM" id="CLU_101036_2_2_5"/>
<dbReference type="Proteomes" id="UP000000540">
    <property type="component" value="Chromosome I"/>
</dbReference>
<dbReference type="Gene3D" id="3.30.450.150">
    <property type="entry name" value="Haem-degrading domain"/>
    <property type="match status" value="1"/>
</dbReference>
<dbReference type="HAMAP" id="MF_00761">
    <property type="entry name" value="UPF0303"/>
    <property type="match status" value="1"/>
</dbReference>
<dbReference type="InterPro" id="IPR005624">
    <property type="entry name" value="PduO/GlcC-like"/>
</dbReference>
<dbReference type="InterPro" id="IPR038084">
    <property type="entry name" value="PduO/GlcC-like_sf"/>
</dbReference>
<dbReference type="InterPro" id="IPR010371">
    <property type="entry name" value="YBR137W-like"/>
</dbReference>
<dbReference type="NCBIfam" id="NF002693">
    <property type="entry name" value="PRK02487.1-2"/>
    <property type="match status" value="1"/>
</dbReference>
<dbReference type="NCBIfam" id="NF002696">
    <property type="entry name" value="PRK02487.1-5"/>
    <property type="match status" value="1"/>
</dbReference>
<dbReference type="PANTHER" id="PTHR28255">
    <property type="match status" value="1"/>
</dbReference>
<dbReference type="PANTHER" id="PTHR28255:SF1">
    <property type="entry name" value="UPF0303 PROTEIN YBR137W"/>
    <property type="match status" value="1"/>
</dbReference>
<dbReference type="Pfam" id="PF03928">
    <property type="entry name" value="HbpS-like"/>
    <property type="match status" value="1"/>
</dbReference>
<dbReference type="PIRSF" id="PIRSF008757">
    <property type="entry name" value="UCP008757"/>
    <property type="match status" value="1"/>
</dbReference>
<dbReference type="SUPFAM" id="SSF143744">
    <property type="entry name" value="GlcG-like"/>
    <property type="match status" value="1"/>
</dbReference>
<sequence>MAQGDDNKQAIGQIIRQEQALIFPSLDENDAFSLGQRIRDIAVKDKLGIAIDISLWDRRLFFAATAGATADNTEWLRRKFNVVRRFHVSTYRLVLEQNREDRMFAPYKALDVADYALAGGGFPIRVSGAGVIGAVIVSGLPQREDHNLVVRAVAEHVGQDPVALALPAA</sequence>
<reference key="1">
    <citation type="journal article" date="2005" name="J. Bacteriol.">
        <title>Completion of the genome sequence of Brucella abortus and comparison to the highly similar genomes of Brucella melitensis and Brucella suis.</title>
        <authorList>
            <person name="Halling S.M."/>
            <person name="Peterson-Burch B.D."/>
            <person name="Bricker B.J."/>
            <person name="Zuerner R.L."/>
            <person name="Qing Z."/>
            <person name="Li L.-L."/>
            <person name="Kapur V."/>
            <person name="Alt D.P."/>
            <person name="Olsen S.C."/>
        </authorList>
    </citation>
    <scope>NUCLEOTIDE SEQUENCE [LARGE SCALE GENOMIC DNA]</scope>
    <source>
        <strain>9-941</strain>
    </source>
</reference>
<accession>Q57C98</accession>
<protein>
    <recommendedName>
        <fullName evidence="1">UPF0303 protein BruAb1_1406</fullName>
    </recommendedName>
</protein>
<organism>
    <name type="scientific">Brucella abortus biovar 1 (strain 9-941)</name>
    <dbReference type="NCBI Taxonomy" id="262698"/>
    <lineage>
        <taxon>Bacteria</taxon>
        <taxon>Pseudomonadati</taxon>
        <taxon>Pseudomonadota</taxon>
        <taxon>Alphaproteobacteria</taxon>
        <taxon>Hyphomicrobiales</taxon>
        <taxon>Brucellaceae</taxon>
        <taxon>Brucella/Ochrobactrum group</taxon>
        <taxon>Brucella</taxon>
    </lineage>
</organism>
<comment type="similarity">
    <text evidence="1">Belongs to the UPF0303 family.</text>
</comment>
<evidence type="ECO:0000255" key="1">
    <source>
        <dbReference type="HAMAP-Rule" id="MF_00761"/>
    </source>
</evidence>
<feature type="chain" id="PRO_1000046735" description="UPF0303 protein BruAb1_1406">
    <location>
        <begin position="1"/>
        <end position="169"/>
    </location>
</feature>
<gene>
    <name type="ordered locus">BruAb1_1406</name>
</gene>